<reference key="1">
    <citation type="journal article" date="2005" name="Proc. Natl. Acad. Sci. U.S.A.">
        <title>Whole genome sequence of Staphylococcus saprophyticus reveals the pathogenesis of uncomplicated urinary tract infection.</title>
        <authorList>
            <person name="Kuroda M."/>
            <person name="Yamashita A."/>
            <person name="Hirakawa H."/>
            <person name="Kumano M."/>
            <person name="Morikawa K."/>
            <person name="Higashide M."/>
            <person name="Maruyama A."/>
            <person name="Inose Y."/>
            <person name="Matoba K."/>
            <person name="Toh H."/>
            <person name="Kuhara S."/>
            <person name="Hattori M."/>
            <person name="Ohta T."/>
        </authorList>
    </citation>
    <scope>NUCLEOTIDE SEQUENCE [LARGE SCALE GENOMIC DNA]</scope>
    <source>
        <strain>ATCC 15305 / DSM 20229 / NCIMB 8711 / NCTC 7292 / S-41</strain>
    </source>
</reference>
<accession>Q49Z73</accession>
<keyword id="KW-0067">ATP-binding</keyword>
<keyword id="KW-0315">Glutamine amidotransferase</keyword>
<keyword id="KW-0436">Ligase</keyword>
<keyword id="KW-0460">Magnesium</keyword>
<keyword id="KW-0479">Metal-binding</keyword>
<keyword id="KW-0547">Nucleotide-binding</keyword>
<keyword id="KW-0665">Pyrimidine biosynthesis</keyword>
<keyword id="KW-1185">Reference proteome</keyword>
<feature type="chain" id="PRO_0000138231" description="CTP synthase">
    <location>
        <begin position="1"/>
        <end position="536"/>
    </location>
</feature>
<feature type="domain" description="Glutamine amidotransferase type-1" evidence="1">
    <location>
        <begin position="293"/>
        <end position="535"/>
    </location>
</feature>
<feature type="region of interest" description="Amidoligase domain" evidence="1">
    <location>
        <begin position="1"/>
        <end position="267"/>
    </location>
</feature>
<feature type="active site" description="Nucleophile; for glutamine hydrolysis" evidence="1">
    <location>
        <position position="382"/>
    </location>
</feature>
<feature type="active site" evidence="1">
    <location>
        <position position="508"/>
    </location>
</feature>
<feature type="active site" evidence="1">
    <location>
        <position position="510"/>
    </location>
</feature>
<feature type="binding site" evidence="1">
    <location>
        <position position="13"/>
    </location>
    <ligand>
        <name>CTP</name>
        <dbReference type="ChEBI" id="CHEBI:37563"/>
        <note>allosteric inhibitor</note>
    </ligand>
</feature>
<feature type="binding site" evidence="1">
    <location>
        <position position="13"/>
    </location>
    <ligand>
        <name>UTP</name>
        <dbReference type="ChEBI" id="CHEBI:46398"/>
    </ligand>
</feature>
<feature type="binding site" evidence="1">
    <location>
        <begin position="14"/>
        <end position="19"/>
    </location>
    <ligand>
        <name>ATP</name>
        <dbReference type="ChEBI" id="CHEBI:30616"/>
    </ligand>
</feature>
<feature type="binding site" evidence="1">
    <location>
        <position position="54"/>
    </location>
    <ligand>
        <name>L-glutamine</name>
        <dbReference type="ChEBI" id="CHEBI:58359"/>
    </ligand>
</feature>
<feature type="binding site" evidence="1">
    <location>
        <position position="71"/>
    </location>
    <ligand>
        <name>ATP</name>
        <dbReference type="ChEBI" id="CHEBI:30616"/>
    </ligand>
</feature>
<feature type="binding site" evidence="1">
    <location>
        <position position="71"/>
    </location>
    <ligand>
        <name>Mg(2+)</name>
        <dbReference type="ChEBI" id="CHEBI:18420"/>
    </ligand>
</feature>
<feature type="binding site" evidence="1">
    <location>
        <position position="141"/>
    </location>
    <ligand>
        <name>Mg(2+)</name>
        <dbReference type="ChEBI" id="CHEBI:18420"/>
    </ligand>
</feature>
<feature type="binding site" evidence="1">
    <location>
        <begin position="148"/>
        <end position="150"/>
    </location>
    <ligand>
        <name>CTP</name>
        <dbReference type="ChEBI" id="CHEBI:37563"/>
        <note>allosteric inhibitor</note>
    </ligand>
</feature>
<feature type="binding site" evidence="1">
    <location>
        <begin position="188"/>
        <end position="193"/>
    </location>
    <ligand>
        <name>CTP</name>
        <dbReference type="ChEBI" id="CHEBI:37563"/>
        <note>allosteric inhibitor</note>
    </ligand>
</feature>
<feature type="binding site" evidence="1">
    <location>
        <begin position="188"/>
        <end position="193"/>
    </location>
    <ligand>
        <name>UTP</name>
        <dbReference type="ChEBI" id="CHEBI:46398"/>
    </ligand>
</feature>
<feature type="binding site" evidence="1">
    <location>
        <position position="224"/>
    </location>
    <ligand>
        <name>CTP</name>
        <dbReference type="ChEBI" id="CHEBI:37563"/>
        <note>allosteric inhibitor</note>
    </ligand>
</feature>
<feature type="binding site" evidence="1">
    <location>
        <position position="224"/>
    </location>
    <ligand>
        <name>UTP</name>
        <dbReference type="ChEBI" id="CHEBI:46398"/>
    </ligand>
</feature>
<feature type="binding site" evidence="1">
    <location>
        <begin position="240"/>
        <end position="242"/>
    </location>
    <ligand>
        <name>ATP</name>
        <dbReference type="ChEBI" id="CHEBI:30616"/>
    </ligand>
</feature>
<feature type="binding site" evidence="1">
    <location>
        <position position="355"/>
    </location>
    <ligand>
        <name>L-glutamine</name>
        <dbReference type="ChEBI" id="CHEBI:58359"/>
    </ligand>
</feature>
<feature type="binding site" evidence="1">
    <location>
        <begin position="383"/>
        <end position="386"/>
    </location>
    <ligand>
        <name>L-glutamine</name>
        <dbReference type="ChEBI" id="CHEBI:58359"/>
    </ligand>
</feature>
<feature type="binding site" evidence="1">
    <location>
        <position position="406"/>
    </location>
    <ligand>
        <name>L-glutamine</name>
        <dbReference type="ChEBI" id="CHEBI:58359"/>
    </ligand>
</feature>
<feature type="binding site" evidence="1">
    <location>
        <position position="463"/>
    </location>
    <ligand>
        <name>L-glutamine</name>
        <dbReference type="ChEBI" id="CHEBI:58359"/>
    </ligand>
</feature>
<protein>
    <recommendedName>
        <fullName evidence="1">CTP synthase</fullName>
        <ecNumber evidence="1">6.3.4.2</ecNumber>
    </recommendedName>
    <alternativeName>
        <fullName evidence="1">Cytidine 5'-triphosphate synthase</fullName>
    </alternativeName>
    <alternativeName>
        <fullName evidence="1">Cytidine triphosphate synthetase</fullName>
        <shortName evidence="1">CTP synthetase</shortName>
        <shortName evidence="1">CTPS</shortName>
    </alternativeName>
    <alternativeName>
        <fullName evidence="1">UTP--ammonia ligase</fullName>
    </alternativeName>
</protein>
<comment type="function">
    <text evidence="1">Catalyzes the ATP-dependent amination of UTP to CTP with either L-glutamine or ammonia as the source of nitrogen. Regulates intracellular CTP levels through interactions with the four ribonucleotide triphosphates.</text>
</comment>
<comment type="catalytic activity">
    <reaction evidence="1">
        <text>UTP + L-glutamine + ATP + H2O = CTP + L-glutamate + ADP + phosphate + 2 H(+)</text>
        <dbReference type="Rhea" id="RHEA:26426"/>
        <dbReference type="ChEBI" id="CHEBI:15377"/>
        <dbReference type="ChEBI" id="CHEBI:15378"/>
        <dbReference type="ChEBI" id="CHEBI:29985"/>
        <dbReference type="ChEBI" id="CHEBI:30616"/>
        <dbReference type="ChEBI" id="CHEBI:37563"/>
        <dbReference type="ChEBI" id="CHEBI:43474"/>
        <dbReference type="ChEBI" id="CHEBI:46398"/>
        <dbReference type="ChEBI" id="CHEBI:58359"/>
        <dbReference type="ChEBI" id="CHEBI:456216"/>
        <dbReference type="EC" id="6.3.4.2"/>
    </reaction>
</comment>
<comment type="catalytic activity">
    <reaction evidence="1">
        <text>L-glutamine + H2O = L-glutamate + NH4(+)</text>
        <dbReference type="Rhea" id="RHEA:15889"/>
        <dbReference type="ChEBI" id="CHEBI:15377"/>
        <dbReference type="ChEBI" id="CHEBI:28938"/>
        <dbReference type="ChEBI" id="CHEBI:29985"/>
        <dbReference type="ChEBI" id="CHEBI:58359"/>
    </reaction>
</comment>
<comment type="catalytic activity">
    <reaction evidence="1">
        <text>UTP + NH4(+) + ATP = CTP + ADP + phosphate + 2 H(+)</text>
        <dbReference type="Rhea" id="RHEA:16597"/>
        <dbReference type="ChEBI" id="CHEBI:15378"/>
        <dbReference type="ChEBI" id="CHEBI:28938"/>
        <dbReference type="ChEBI" id="CHEBI:30616"/>
        <dbReference type="ChEBI" id="CHEBI:37563"/>
        <dbReference type="ChEBI" id="CHEBI:43474"/>
        <dbReference type="ChEBI" id="CHEBI:46398"/>
        <dbReference type="ChEBI" id="CHEBI:456216"/>
    </reaction>
</comment>
<comment type="activity regulation">
    <text evidence="1">Allosterically activated by GTP, when glutamine is the substrate; GTP has no effect on the reaction when ammonia is the substrate. The allosteric effector GTP functions by stabilizing the protein conformation that binds the tetrahedral intermediate(s) formed during glutamine hydrolysis. Inhibited by the product CTP, via allosteric rather than competitive inhibition.</text>
</comment>
<comment type="pathway">
    <text evidence="1">Pyrimidine metabolism; CTP biosynthesis via de novo pathway; CTP from UDP: step 2/2.</text>
</comment>
<comment type="subunit">
    <text evidence="1">Homotetramer.</text>
</comment>
<comment type="miscellaneous">
    <text evidence="1">CTPSs have evolved a hybrid strategy for distinguishing between UTP and CTP. The overlapping regions of the product feedback inhibitory and substrate sites recognize a common feature in both compounds, the triphosphate moiety. To differentiate isosteric substrate and product pyrimidine rings, an additional pocket far from the expected kinase/ligase catalytic site, specifically recognizes the cytosine and ribose portions of the product inhibitor.</text>
</comment>
<comment type="similarity">
    <text evidence="1">Belongs to the CTP synthase family.</text>
</comment>
<dbReference type="EC" id="6.3.4.2" evidence="1"/>
<dbReference type="EMBL" id="AP008934">
    <property type="protein sequence ID" value="BAE17903.1"/>
    <property type="molecule type" value="Genomic_DNA"/>
</dbReference>
<dbReference type="RefSeq" id="WP_011302663.1">
    <property type="nucleotide sequence ID" value="NZ_MTGA01000032.1"/>
</dbReference>
<dbReference type="SMR" id="Q49Z73"/>
<dbReference type="GeneID" id="3615823"/>
<dbReference type="KEGG" id="ssp:SSP0758"/>
<dbReference type="PATRIC" id="fig|342451.11.peg.760"/>
<dbReference type="eggNOG" id="COG0504">
    <property type="taxonomic scope" value="Bacteria"/>
</dbReference>
<dbReference type="HOGENOM" id="CLU_011675_5_0_9"/>
<dbReference type="OrthoDB" id="9801107at2"/>
<dbReference type="UniPathway" id="UPA00159">
    <property type="reaction ID" value="UER00277"/>
</dbReference>
<dbReference type="Proteomes" id="UP000006371">
    <property type="component" value="Chromosome"/>
</dbReference>
<dbReference type="GO" id="GO:0005829">
    <property type="term" value="C:cytosol"/>
    <property type="evidence" value="ECO:0007669"/>
    <property type="project" value="TreeGrafter"/>
</dbReference>
<dbReference type="GO" id="GO:0005524">
    <property type="term" value="F:ATP binding"/>
    <property type="evidence" value="ECO:0007669"/>
    <property type="project" value="UniProtKB-KW"/>
</dbReference>
<dbReference type="GO" id="GO:0003883">
    <property type="term" value="F:CTP synthase activity"/>
    <property type="evidence" value="ECO:0007669"/>
    <property type="project" value="UniProtKB-UniRule"/>
</dbReference>
<dbReference type="GO" id="GO:0004359">
    <property type="term" value="F:glutaminase activity"/>
    <property type="evidence" value="ECO:0007669"/>
    <property type="project" value="RHEA"/>
</dbReference>
<dbReference type="GO" id="GO:0042802">
    <property type="term" value="F:identical protein binding"/>
    <property type="evidence" value="ECO:0007669"/>
    <property type="project" value="TreeGrafter"/>
</dbReference>
<dbReference type="GO" id="GO:0046872">
    <property type="term" value="F:metal ion binding"/>
    <property type="evidence" value="ECO:0007669"/>
    <property type="project" value="UniProtKB-KW"/>
</dbReference>
<dbReference type="GO" id="GO:0044210">
    <property type="term" value="P:'de novo' CTP biosynthetic process"/>
    <property type="evidence" value="ECO:0007669"/>
    <property type="project" value="UniProtKB-UniRule"/>
</dbReference>
<dbReference type="GO" id="GO:0019856">
    <property type="term" value="P:pyrimidine nucleobase biosynthetic process"/>
    <property type="evidence" value="ECO:0007669"/>
    <property type="project" value="TreeGrafter"/>
</dbReference>
<dbReference type="CDD" id="cd03113">
    <property type="entry name" value="CTPS_N"/>
    <property type="match status" value="1"/>
</dbReference>
<dbReference type="CDD" id="cd01746">
    <property type="entry name" value="GATase1_CTP_Synthase"/>
    <property type="match status" value="1"/>
</dbReference>
<dbReference type="FunFam" id="3.40.50.300:FF:000009">
    <property type="entry name" value="CTP synthase"/>
    <property type="match status" value="1"/>
</dbReference>
<dbReference type="FunFam" id="3.40.50.880:FF:000002">
    <property type="entry name" value="CTP synthase"/>
    <property type="match status" value="1"/>
</dbReference>
<dbReference type="Gene3D" id="3.40.50.880">
    <property type="match status" value="1"/>
</dbReference>
<dbReference type="Gene3D" id="3.40.50.300">
    <property type="entry name" value="P-loop containing nucleotide triphosphate hydrolases"/>
    <property type="match status" value="1"/>
</dbReference>
<dbReference type="HAMAP" id="MF_01227">
    <property type="entry name" value="PyrG"/>
    <property type="match status" value="1"/>
</dbReference>
<dbReference type="InterPro" id="IPR029062">
    <property type="entry name" value="Class_I_gatase-like"/>
</dbReference>
<dbReference type="InterPro" id="IPR004468">
    <property type="entry name" value="CTP_synthase"/>
</dbReference>
<dbReference type="InterPro" id="IPR017456">
    <property type="entry name" value="CTP_synthase_N"/>
</dbReference>
<dbReference type="InterPro" id="IPR017926">
    <property type="entry name" value="GATASE"/>
</dbReference>
<dbReference type="InterPro" id="IPR033828">
    <property type="entry name" value="GATase1_CTP_Synthase"/>
</dbReference>
<dbReference type="InterPro" id="IPR027417">
    <property type="entry name" value="P-loop_NTPase"/>
</dbReference>
<dbReference type="NCBIfam" id="NF003792">
    <property type="entry name" value="PRK05380.1"/>
    <property type="match status" value="1"/>
</dbReference>
<dbReference type="NCBIfam" id="TIGR00337">
    <property type="entry name" value="PyrG"/>
    <property type="match status" value="1"/>
</dbReference>
<dbReference type="PANTHER" id="PTHR11550">
    <property type="entry name" value="CTP SYNTHASE"/>
    <property type="match status" value="1"/>
</dbReference>
<dbReference type="PANTHER" id="PTHR11550:SF0">
    <property type="entry name" value="CTP SYNTHASE-RELATED"/>
    <property type="match status" value="1"/>
</dbReference>
<dbReference type="Pfam" id="PF06418">
    <property type="entry name" value="CTP_synth_N"/>
    <property type="match status" value="1"/>
</dbReference>
<dbReference type="Pfam" id="PF00117">
    <property type="entry name" value="GATase"/>
    <property type="match status" value="1"/>
</dbReference>
<dbReference type="SUPFAM" id="SSF52317">
    <property type="entry name" value="Class I glutamine amidotransferase-like"/>
    <property type="match status" value="1"/>
</dbReference>
<dbReference type="SUPFAM" id="SSF52540">
    <property type="entry name" value="P-loop containing nucleoside triphosphate hydrolases"/>
    <property type="match status" value="1"/>
</dbReference>
<dbReference type="PROSITE" id="PS51273">
    <property type="entry name" value="GATASE_TYPE_1"/>
    <property type="match status" value="1"/>
</dbReference>
<organism>
    <name type="scientific">Staphylococcus saprophyticus subsp. saprophyticus (strain ATCC 15305 / DSM 20229 / NCIMB 8711 / NCTC 7292 / S-41)</name>
    <dbReference type="NCBI Taxonomy" id="342451"/>
    <lineage>
        <taxon>Bacteria</taxon>
        <taxon>Bacillati</taxon>
        <taxon>Bacillota</taxon>
        <taxon>Bacilli</taxon>
        <taxon>Bacillales</taxon>
        <taxon>Staphylococcaceae</taxon>
        <taxon>Staphylococcus</taxon>
    </lineage>
</organism>
<gene>
    <name evidence="1" type="primary">pyrG</name>
    <name type="ordered locus">SSP0758</name>
</gene>
<sequence>MTKFIFVTGGVVSSLGKGITAASLGRLLKDRGLKVTIQKFDPYLNVDPGTMSPYQHGEVFVTDDGAETDLDLGHYERFIDINLNKYSNVTAGKVYSHVLKKERRGDYLGGTVQVIPHITNEIKERLLLAGESTNADVVITEIGGTTGDIESLPFIEAIRQIRSDLGRENVMYVHCTLLPYIKAAGEMKTKPTQHSVKELRGLGIQPDLIVVRTEYELTQDLKDKIALFCDIDKASVIECRDADSLYEIPLQLSKQDMDDIVIKRLELNPKYETQLDEWQYLLDTVNSLDGKITIGLVGKYVSLQDAYLSVVESLKHAGYPFKKDIEVKWIDSSEVTDENVAEILAEVDGILVPGGFGFRASEGKISAIKYARENNVPYFGICLGMQLATVEFARNVIGLDDAHSAELDPNTPHPIIDLLPEQKDIEDLGGTLRLGLYPCHIKEGTLADSIYNETEIEERHRHRYEFNNEYREQLEANGMVFSGTSPDGRLVEMVEIPSNDFFVACQFHPEFLSRPNRPQPIFKAFIEASLNHQQSK</sequence>
<evidence type="ECO:0000255" key="1">
    <source>
        <dbReference type="HAMAP-Rule" id="MF_01227"/>
    </source>
</evidence>
<name>PYRG_STAS1</name>
<proteinExistence type="inferred from homology"/>